<dbReference type="EMBL" id="CP000384">
    <property type="protein sequence ID" value="ABG08076.1"/>
    <property type="molecule type" value="Genomic_DNA"/>
</dbReference>
<dbReference type="SMR" id="Q1BAK8"/>
<dbReference type="KEGG" id="mmc:Mmcs_1967"/>
<dbReference type="HOGENOM" id="CLU_077636_0_0_11"/>
<dbReference type="BioCyc" id="MSP164756:G1G6O-2012-MONOMER"/>
<dbReference type="GO" id="GO:0005737">
    <property type="term" value="C:cytoplasm"/>
    <property type="evidence" value="ECO:0007669"/>
    <property type="project" value="UniProtKB-SubCell"/>
</dbReference>
<dbReference type="GO" id="GO:0005840">
    <property type="term" value="C:ribosome"/>
    <property type="evidence" value="ECO:0007669"/>
    <property type="project" value="InterPro"/>
</dbReference>
<dbReference type="GO" id="GO:0043022">
    <property type="term" value="F:ribosome binding"/>
    <property type="evidence" value="ECO:0007669"/>
    <property type="project" value="InterPro"/>
</dbReference>
<dbReference type="GO" id="GO:0042274">
    <property type="term" value="P:ribosomal small subunit biogenesis"/>
    <property type="evidence" value="ECO:0007669"/>
    <property type="project" value="UniProtKB-UniRule"/>
</dbReference>
<dbReference type="GO" id="GO:0006364">
    <property type="term" value="P:rRNA processing"/>
    <property type="evidence" value="ECO:0007669"/>
    <property type="project" value="UniProtKB-UniRule"/>
</dbReference>
<dbReference type="Gene3D" id="2.30.30.240">
    <property type="entry name" value="PRC-barrel domain"/>
    <property type="match status" value="1"/>
</dbReference>
<dbReference type="Gene3D" id="2.40.30.60">
    <property type="entry name" value="RimM"/>
    <property type="match status" value="1"/>
</dbReference>
<dbReference type="HAMAP" id="MF_00014">
    <property type="entry name" value="Ribosome_mat_RimM"/>
    <property type="match status" value="1"/>
</dbReference>
<dbReference type="InterPro" id="IPR011033">
    <property type="entry name" value="PRC_barrel-like_sf"/>
</dbReference>
<dbReference type="InterPro" id="IPR056792">
    <property type="entry name" value="PRC_RimM"/>
</dbReference>
<dbReference type="InterPro" id="IPR011961">
    <property type="entry name" value="RimM"/>
</dbReference>
<dbReference type="InterPro" id="IPR002676">
    <property type="entry name" value="RimM_N"/>
</dbReference>
<dbReference type="InterPro" id="IPR036976">
    <property type="entry name" value="RimM_N_sf"/>
</dbReference>
<dbReference type="InterPro" id="IPR009000">
    <property type="entry name" value="Transl_B-barrel_sf"/>
</dbReference>
<dbReference type="NCBIfam" id="TIGR02273">
    <property type="entry name" value="16S_RimM"/>
    <property type="match status" value="1"/>
</dbReference>
<dbReference type="PANTHER" id="PTHR33692">
    <property type="entry name" value="RIBOSOME MATURATION FACTOR RIMM"/>
    <property type="match status" value="1"/>
</dbReference>
<dbReference type="PANTHER" id="PTHR33692:SF1">
    <property type="entry name" value="RIBOSOME MATURATION FACTOR RIMM"/>
    <property type="match status" value="1"/>
</dbReference>
<dbReference type="Pfam" id="PF24986">
    <property type="entry name" value="PRC_RimM"/>
    <property type="match status" value="1"/>
</dbReference>
<dbReference type="Pfam" id="PF01782">
    <property type="entry name" value="RimM"/>
    <property type="match status" value="1"/>
</dbReference>
<dbReference type="SUPFAM" id="SSF50346">
    <property type="entry name" value="PRC-barrel domain"/>
    <property type="match status" value="1"/>
</dbReference>
<dbReference type="SUPFAM" id="SSF50447">
    <property type="entry name" value="Translation proteins"/>
    <property type="match status" value="1"/>
</dbReference>
<gene>
    <name evidence="1" type="primary">rimM</name>
    <name type="ordered locus">Mmcs_1967</name>
</gene>
<sequence>MDLVIGRVAKAHGVTGELVVEVRTDDPDARFVPGARLRGRAPRGGAERAFVVESVRPHGGRLLLRLDGVADRTAADALRGTVFLVDSADLPPIEEPDEYYDHQLEGLLVRTVDGVDVGTVAEVLHTAAGELLSVKTPEGAEILVPFVTAIVPRVSLADGLVEIDPPEGLLDLE</sequence>
<keyword id="KW-0143">Chaperone</keyword>
<keyword id="KW-0963">Cytoplasm</keyword>
<keyword id="KW-0690">Ribosome biogenesis</keyword>
<keyword id="KW-0698">rRNA processing</keyword>
<name>RIMM_MYCSS</name>
<organism>
    <name type="scientific">Mycobacterium sp. (strain MCS)</name>
    <dbReference type="NCBI Taxonomy" id="164756"/>
    <lineage>
        <taxon>Bacteria</taxon>
        <taxon>Bacillati</taxon>
        <taxon>Actinomycetota</taxon>
        <taxon>Actinomycetes</taxon>
        <taxon>Mycobacteriales</taxon>
        <taxon>Mycobacteriaceae</taxon>
        <taxon>Mycobacterium</taxon>
    </lineage>
</organism>
<comment type="function">
    <text evidence="1">An accessory protein needed during the final step in the assembly of 30S ribosomal subunit, possibly for assembly of the head region. Essential for efficient processing of 16S rRNA. May be needed both before and after RbfA during the maturation of 16S rRNA. It has affinity for free ribosomal 30S subunits but not for 70S ribosomes.</text>
</comment>
<comment type="subunit">
    <text evidence="1">Binds ribosomal protein uS19.</text>
</comment>
<comment type="subcellular location">
    <subcellularLocation>
        <location evidence="1">Cytoplasm</location>
    </subcellularLocation>
</comment>
<comment type="domain">
    <text evidence="1">The PRC barrel domain binds ribosomal protein uS19.</text>
</comment>
<comment type="similarity">
    <text evidence="1">Belongs to the RimM family.</text>
</comment>
<evidence type="ECO:0000255" key="1">
    <source>
        <dbReference type="HAMAP-Rule" id="MF_00014"/>
    </source>
</evidence>
<reference key="1">
    <citation type="submission" date="2006-06" db="EMBL/GenBank/DDBJ databases">
        <title>Complete sequence of chromosome of Mycobacterium sp. MCS.</title>
        <authorList>
            <consortium name="US DOE Joint Genome Institute"/>
            <person name="Copeland A."/>
            <person name="Lucas S."/>
            <person name="Lapidus A."/>
            <person name="Barry K."/>
            <person name="Detter J.C."/>
            <person name="Glavina del Rio T."/>
            <person name="Hammon N."/>
            <person name="Israni S."/>
            <person name="Dalin E."/>
            <person name="Tice H."/>
            <person name="Pitluck S."/>
            <person name="Martinez M."/>
            <person name="Schmutz J."/>
            <person name="Larimer F."/>
            <person name="Land M."/>
            <person name="Hauser L."/>
            <person name="Kyrpides N."/>
            <person name="Kim E."/>
            <person name="Miller C.D."/>
            <person name="Hughes J.E."/>
            <person name="Anderson A.J."/>
            <person name="Sims R.C."/>
            <person name="Richardson P."/>
        </authorList>
    </citation>
    <scope>NUCLEOTIDE SEQUENCE [LARGE SCALE GENOMIC DNA]</scope>
    <source>
        <strain>MCS</strain>
    </source>
</reference>
<protein>
    <recommendedName>
        <fullName evidence="1">Ribosome maturation factor RimM</fullName>
    </recommendedName>
</protein>
<accession>Q1BAK8</accession>
<proteinExistence type="inferred from homology"/>
<feature type="chain" id="PRO_1000001200" description="Ribosome maturation factor RimM">
    <location>
        <begin position="1"/>
        <end position="173"/>
    </location>
</feature>
<feature type="domain" description="PRC barrel" evidence="1">
    <location>
        <begin position="96"/>
        <end position="169"/>
    </location>
</feature>